<reference key="1">
    <citation type="submission" date="2007-02" db="EMBL/GenBank/DDBJ databases">
        <title>Complete sequence of Mycobacterium sp. JLS.</title>
        <authorList>
            <consortium name="US DOE Joint Genome Institute"/>
            <person name="Copeland A."/>
            <person name="Lucas S."/>
            <person name="Lapidus A."/>
            <person name="Barry K."/>
            <person name="Detter J.C."/>
            <person name="Glavina del Rio T."/>
            <person name="Hammon N."/>
            <person name="Israni S."/>
            <person name="Dalin E."/>
            <person name="Tice H."/>
            <person name="Pitluck S."/>
            <person name="Chain P."/>
            <person name="Malfatti S."/>
            <person name="Shin M."/>
            <person name="Vergez L."/>
            <person name="Schmutz J."/>
            <person name="Larimer F."/>
            <person name="Land M."/>
            <person name="Hauser L."/>
            <person name="Kyrpides N."/>
            <person name="Mikhailova N."/>
            <person name="Miller C.D."/>
            <person name="Anderson A.J."/>
            <person name="Sims R.C."/>
            <person name="Richardson P."/>
        </authorList>
    </citation>
    <scope>NUCLEOTIDE SEQUENCE [LARGE SCALE GENOMIC DNA]</scope>
    <source>
        <strain>JLS</strain>
    </source>
</reference>
<dbReference type="EC" id="2.5.1.72" evidence="1"/>
<dbReference type="EMBL" id="CP000580">
    <property type="protein sequence ID" value="ABN98864.1"/>
    <property type="molecule type" value="Genomic_DNA"/>
</dbReference>
<dbReference type="SMR" id="A3Q137"/>
<dbReference type="KEGG" id="mjl:Mjls_3085"/>
<dbReference type="HOGENOM" id="CLU_047382_0_0_11"/>
<dbReference type="UniPathway" id="UPA00253">
    <property type="reaction ID" value="UER00327"/>
</dbReference>
<dbReference type="GO" id="GO:0005829">
    <property type="term" value="C:cytosol"/>
    <property type="evidence" value="ECO:0007669"/>
    <property type="project" value="TreeGrafter"/>
</dbReference>
<dbReference type="GO" id="GO:0051539">
    <property type="term" value="F:4 iron, 4 sulfur cluster binding"/>
    <property type="evidence" value="ECO:0007669"/>
    <property type="project" value="UniProtKB-KW"/>
</dbReference>
<dbReference type="GO" id="GO:0046872">
    <property type="term" value="F:metal ion binding"/>
    <property type="evidence" value="ECO:0007669"/>
    <property type="project" value="UniProtKB-KW"/>
</dbReference>
<dbReference type="GO" id="GO:0008987">
    <property type="term" value="F:quinolinate synthetase A activity"/>
    <property type="evidence" value="ECO:0007669"/>
    <property type="project" value="UniProtKB-UniRule"/>
</dbReference>
<dbReference type="GO" id="GO:0034628">
    <property type="term" value="P:'de novo' NAD biosynthetic process from L-aspartate"/>
    <property type="evidence" value="ECO:0007669"/>
    <property type="project" value="TreeGrafter"/>
</dbReference>
<dbReference type="FunFam" id="3.40.50.10800:FF:000007">
    <property type="entry name" value="Quinolinate synthase A"/>
    <property type="match status" value="1"/>
</dbReference>
<dbReference type="Gene3D" id="3.40.50.10800">
    <property type="entry name" value="NadA-like"/>
    <property type="match status" value="3"/>
</dbReference>
<dbReference type="HAMAP" id="MF_00568">
    <property type="entry name" value="NadA_type2"/>
    <property type="match status" value="1"/>
</dbReference>
<dbReference type="InterPro" id="IPR003473">
    <property type="entry name" value="NadA"/>
</dbReference>
<dbReference type="InterPro" id="IPR036094">
    <property type="entry name" value="NadA_sf"/>
</dbReference>
<dbReference type="InterPro" id="IPR023066">
    <property type="entry name" value="Quinolinate_synth_type2"/>
</dbReference>
<dbReference type="NCBIfam" id="TIGR00550">
    <property type="entry name" value="nadA"/>
    <property type="match status" value="1"/>
</dbReference>
<dbReference type="NCBIfam" id="NF006878">
    <property type="entry name" value="PRK09375.1-2"/>
    <property type="match status" value="1"/>
</dbReference>
<dbReference type="NCBIfam" id="NF006879">
    <property type="entry name" value="PRK09375.1-4"/>
    <property type="match status" value="1"/>
</dbReference>
<dbReference type="PANTHER" id="PTHR30573:SF0">
    <property type="entry name" value="QUINOLINATE SYNTHASE, CHLOROPLASTIC"/>
    <property type="match status" value="1"/>
</dbReference>
<dbReference type="PANTHER" id="PTHR30573">
    <property type="entry name" value="QUINOLINATE SYNTHETASE A"/>
    <property type="match status" value="1"/>
</dbReference>
<dbReference type="Pfam" id="PF02445">
    <property type="entry name" value="NadA"/>
    <property type="match status" value="1"/>
</dbReference>
<dbReference type="SUPFAM" id="SSF142754">
    <property type="entry name" value="NadA-like"/>
    <property type="match status" value="1"/>
</dbReference>
<keyword id="KW-0004">4Fe-4S</keyword>
<keyword id="KW-0963">Cytoplasm</keyword>
<keyword id="KW-0408">Iron</keyword>
<keyword id="KW-0411">Iron-sulfur</keyword>
<keyword id="KW-0479">Metal-binding</keyword>
<keyword id="KW-0662">Pyridine nucleotide biosynthesis</keyword>
<keyword id="KW-0808">Transferase</keyword>
<name>NADA_MYCSJ</name>
<organism>
    <name type="scientific">Mycobacterium sp. (strain JLS)</name>
    <dbReference type="NCBI Taxonomy" id="164757"/>
    <lineage>
        <taxon>Bacteria</taxon>
        <taxon>Bacillati</taxon>
        <taxon>Actinomycetota</taxon>
        <taxon>Actinomycetes</taxon>
        <taxon>Mycobacteriales</taxon>
        <taxon>Mycobacteriaceae</taxon>
        <taxon>Mycobacterium</taxon>
    </lineage>
</organism>
<gene>
    <name evidence="1" type="primary">nadA</name>
    <name type="ordered locus">Mjls_3085</name>
</gene>
<feature type="chain" id="PRO_1000082318" description="Quinolinate synthase">
    <location>
        <begin position="1"/>
        <end position="337"/>
    </location>
</feature>
<feature type="binding site" evidence="1">
    <location>
        <position position="40"/>
    </location>
    <ligand>
        <name>iminosuccinate</name>
        <dbReference type="ChEBI" id="CHEBI:77875"/>
    </ligand>
</feature>
<feature type="binding site" evidence="1">
    <location>
        <position position="57"/>
    </location>
    <ligand>
        <name>iminosuccinate</name>
        <dbReference type="ChEBI" id="CHEBI:77875"/>
    </ligand>
</feature>
<feature type="binding site" evidence="1">
    <location>
        <position position="102"/>
    </location>
    <ligand>
        <name>[4Fe-4S] cluster</name>
        <dbReference type="ChEBI" id="CHEBI:49883"/>
    </ligand>
</feature>
<feature type="binding site" evidence="1">
    <location>
        <begin position="128"/>
        <end position="130"/>
    </location>
    <ligand>
        <name>iminosuccinate</name>
        <dbReference type="ChEBI" id="CHEBI:77875"/>
    </ligand>
</feature>
<feature type="binding site" evidence="1">
    <location>
        <position position="145"/>
    </location>
    <ligand>
        <name>iminosuccinate</name>
        <dbReference type="ChEBI" id="CHEBI:77875"/>
    </ligand>
</feature>
<feature type="binding site" evidence="1">
    <location>
        <position position="189"/>
    </location>
    <ligand>
        <name>[4Fe-4S] cluster</name>
        <dbReference type="ChEBI" id="CHEBI:49883"/>
    </ligand>
</feature>
<feature type="binding site" evidence="1">
    <location>
        <begin position="215"/>
        <end position="217"/>
    </location>
    <ligand>
        <name>iminosuccinate</name>
        <dbReference type="ChEBI" id="CHEBI:77875"/>
    </ligand>
</feature>
<feature type="binding site" evidence="1">
    <location>
        <position position="243"/>
    </location>
    <ligand>
        <name>iminosuccinate</name>
        <dbReference type="ChEBI" id="CHEBI:77875"/>
    </ligand>
</feature>
<feature type="binding site" evidence="1">
    <location>
        <position position="288"/>
    </location>
    <ligand>
        <name>[4Fe-4S] cluster</name>
        <dbReference type="ChEBI" id="CHEBI:49883"/>
    </ligand>
</feature>
<evidence type="ECO:0000255" key="1">
    <source>
        <dbReference type="HAMAP-Rule" id="MF_00568"/>
    </source>
</evidence>
<protein>
    <recommendedName>
        <fullName evidence="1">Quinolinate synthase</fullName>
        <ecNumber evidence="1">2.5.1.72</ecNumber>
    </recommendedName>
</protein>
<accession>A3Q137</accession>
<proteinExistence type="inferred from homology"/>
<comment type="function">
    <text evidence="1">Catalyzes the condensation of iminoaspartate with dihydroxyacetone phosphate to form quinolinate.</text>
</comment>
<comment type="catalytic activity">
    <reaction evidence="1">
        <text>iminosuccinate + dihydroxyacetone phosphate = quinolinate + phosphate + 2 H2O + H(+)</text>
        <dbReference type="Rhea" id="RHEA:25888"/>
        <dbReference type="ChEBI" id="CHEBI:15377"/>
        <dbReference type="ChEBI" id="CHEBI:15378"/>
        <dbReference type="ChEBI" id="CHEBI:29959"/>
        <dbReference type="ChEBI" id="CHEBI:43474"/>
        <dbReference type="ChEBI" id="CHEBI:57642"/>
        <dbReference type="ChEBI" id="CHEBI:77875"/>
        <dbReference type="EC" id="2.5.1.72"/>
    </reaction>
    <physiologicalReaction direction="left-to-right" evidence="1">
        <dbReference type="Rhea" id="RHEA:25889"/>
    </physiologicalReaction>
</comment>
<comment type="cofactor">
    <cofactor evidence="1">
        <name>[4Fe-4S] cluster</name>
        <dbReference type="ChEBI" id="CHEBI:49883"/>
    </cofactor>
    <text evidence="1">Binds 1 [4Fe-4S] cluster per subunit.</text>
</comment>
<comment type="pathway">
    <text evidence="1">Cofactor biosynthesis; NAD(+) biosynthesis; quinolinate from iminoaspartate: step 1/1.</text>
</comment>
<comment type="subcellular location">
    <subcellularLocation>
        <location evidence="1">Cytoplasm</location>
    </subcellularLocation>
</comment>
<comment type="similarity">
    <text evidence="1">Belongs to the quinolinate synthase family. Type 2 subfamily.</text>
</comment>
<sequence length="337" mass="36256">MTLLDETASAQFGDDVAPTEEWAAEVRRLARQRGATLLAHNYQLPAIQDVADHVGDSLALSRIAAEAPEDTIVFCGVHFMAETAKILSPDKTVLIPDARAGCSLADSITADQLREWKAEYPGAVVVSYVNTTAAVKAETDICCTSSNAVDVVASIPADREVLFCPDQFLGAHVRRVTGRTNMQIWAGECHVHAGINGDELADQARAHPDAELFVHPECGCATSALYLAGEGAFPADRVKILSTGGMLDAARESRASQVLVATEVGMLHQLRRAAPEIDFQAVNDRASCRYMKMITPAALLRCLTYGTDEVDVDHETARLARRSVQRMIEIGQPGGGE</sequence>